<accession>Q9SR40</accession>
<evidence type="ECO:0000250" key="1"/>
<evidence type="ECO:0000255" key="2"/>
<evidence type="ECO:0000269" key="3">
    <source>
    </source>
</evidence>
<evidence type="ECO:0000269" key="4">
    <source>
    </source>
</evidence>
<evidence type="ECO:0000305" key="5"/>
<reference key="1">
    <citation type="journal article" date="2000" name="Nature">
        <title>Sequence and analysis of chromosome 3 of the plant Arabidopsis thaliana.</title>
        <authorList>
            <person name="Salanoubat M."/>
            <person name="Lemcke K."/>
            <person name="Rieger M."/>
            <person name="Ansorge W."/>
            <person name="Unseld M."/>
            <person name="Fartmann B."/>
            <person name="Valle G."/>
            <person name="Bloecker H."/>
            <person name="Perez-Alonso M."/>
            <person name="Obermaier B."/>
            <person name="Delseny M."/>
            <person name="Boutry M."/>
            <person name="Grivell L.A."/>
            <person name="Mache R."/>
            <person name="Puigdomenech P."/>
            <person name="De Simone V."/>
            <person name="Choisne N."/>
            <person name="Artiguenave F."/>
            <person name="Robert C."/>
            <person name="Brottier P."/>
            <person name="Wincker P."/>
            <person name="Cattolico L."/>
            <person name="Weissenbach J."/>
            <person name="Saurin W."/>
            <person name="Quetier F."/>
            <person name="Schaefer M."/>
            <person name="Mueller-Auer S."/>
            <person name="Gabel C."/>
            <person name="Fuchs M."/>
            <person name="Benes V."/>
            <person name="Wurmbach E."/>
            <person name="Drzonek H."/>
            <person name="Erfle H."/>
            <person name="Jordan N."/>
            <person name="Bangert S."/>
            <person name="Wiedelmann R."/>
            <person name="Kranz H."/>
            <person name="Voss H."/>
            <person name="Holland R."/>
            <person name="Brandt P."/>
            <person name="Nyakatura G."/>
            <person name="Vezzi A."/>
            <person name="D'Angelo M."/>
            <person name="Pallavicini A."/>
            <person name="Toppo S."/>
            <person name="Simionati B."/>
            <person name="Conrad A."/>
            <person name="Hornischer K."/>
            <person name="Kauer G."/>
            <person name="Loehnert T.-H."/>
            <person name="Nordsiek G."/>
            <person name="Reichelt J."/>
            <person name="Scharfe M."/>
            <person name="Schoen O."/>
            <person name="Bargues M."/>
            <person name="Terol J."/>
            <person name="Climent J."/>
            <person name="Navarro P."/>
            <person name="Collado C."/>
            <person name="Perez-Perez A."/>
            <person name="Ottenwaelder B."/>
            <person name="Duchemin D."/>
            <person name="Cooke R."/>
            <person name="Laudie M."/>
            <person name="Berger-Llauro C."/>
            <person name="Purnelle B."/>
            <person name="Masuy D."/>
            <person name="de Haan M."/>
            <person name="Maarse A.C."/>
            <person name="Alcaraz J.-P."/>
            <person name="Cottet A."/>
            <person name="Casacuberta E."/>
            <person name="Monfort A."/>
            <person name="Argiriou A."/>
            <person name="Flores M."/>
            <person name="Liguori R."/>
            <person name="Vitale D."/>
            <person name="Mannhaupt G."/>
            <person name="Haase D."/>
            <person name="Schoof H."/>
            <person name="Rudd S."/>
            <person name="Zaccaria P."/>
            <person name="Mewes H.-W."/>
            <person name="Mayer K.F.X."/>
            <person name="Kaul S."/>
            <person name="Town C.D."/>
            <person name="Koo H.L."/>
            <person name="Tallon L.J."/>
            <person name="Jenkins J."/>
            <person name="Rooney T."/>
            <person name="Rizzo M."/>
            <person name="Walts A."/>
            <person name="Utterback T."/>
            <person name="Fujii C.Y."/>
            <person name="Shea T.P."/>
            <person name="Creasy T.H."/>
            <person name="Haas B."/>
            <person name="Maiti R."/>
            <person name="Wu D."/>
            <person name="Peterson J."/>
            <person name="Van Aken S."/>
            <person name="Pai G."/>
            <person name="Militscher J."/>
            <person name="Sellers P."/>
            <person name="Gill J.E."/>
            <person name="Feldblyum T.V."/>
            <person name="Preuss D."/>
            <person name="Lin X."/>
            <person name="Nierman W.C."/>
            <person name="Salzberg S.L."/>
            <person name="White O."/>
            <person name="Venter J.C."/>
            <person name="Fraser C.M."/>
            <person name="Kaneko T."/>
            <person name="Nakamura Y."/>
            <person name="Sato S."/>
            <person name="Kato T."/>
            <person name="Asamizu E."/>
            <person name="Sasamoto S."/>
            <person name="Kimura T."/>
            <person name="Idesawa K."/>
            <person name="Kawashima K."/>
            <person name="Kishida Y."/>
            <person name="Kiyokawa C."/>
            <person name="Kohara M."/>
            <person name="Matsumoto M."/>
            <person name="Matsuno A."/>
            <person name="Muraki A."/>
            <person name="Nakayama S."/>
            <person name="Nakazaki N."/>
            <person name="Shinpo S."/>
            <person name="Takeuchi C."/>
            <person name="Wada T."/>
            <person name="Watanabe A."/>
            <person name="Yamada M."/>
            <person name="Yasuda M."/>
            <person name="Tabata S."/>
        </authorList>
    </citation>
    <scope>NUCLEOTIDE SEQUENCE [LARGE SCALE GENOMIC DNA]</scope>
    <source>
        <strain>cv. Columbia</strain>
    </source>
</reference>
<reference key="2">
    <citation type="journal article" date="2017" name="Plant J.">
        <title>Araport11: a complete reannotation of the Arabidopsis thaliana reference genome.</title>
        <authorList>
            <person name="Cheng C.Y."/>
            <person name="Krishnakumar V."/>
            <person name="Chan A.P."/>
            <person name="Thibaud-Nissen F."/>
            <person name="Schobel S."/>
            <person name="Town C.D."/>
        </authorList>
    </citation>
    <scope>GENOME REANNOTATION</scope>
    <source>
        <strain>cv. Columbia</strain>
    </source>
</reference>
<reference key="3">
    <citation type="journal article" date="2002" name="Science">
        <title>Functional annotation of a full-length Arabidopsis cDNA collection.</title>
        <authorList>
            <person name="Seki M."/>
            <person name="Narusaka M."/>
            <person name="Kamiya A."/>
            <person name="Ishida J."/>
            <person name="Satou M."/>
            <person name="Sakurai T."/>
            <person name="Nakajima M."/>
            <person name="Enju A."/>
            <person name="Akiyama K."/>
            <person name="Oono Y."/>
            <person name="Muramatsu M."/>
            <person name="Hayashizaki Y."/>
            <person name="Kawai J."/>
            <person name="Carninci P."/>
            <person name="Itoh M."/>
            <person name="Ishii Y."/>
            <person name="Arakawa T."/>
            <person name="Shibata K."/>
            <person name="Shinagawa A."/>
            <person name="Shinozaki K."/>
        </authorList>
    </citation>
    <scope>NUCLEOTIDE SEQUENCE [LARGE SCALE MRNA]</scope>
    <source>
        <strain>cv. Columbia</strain>
    </source>
</reference>
<reference key="4">
    <citation type="journal article" date="2003" name="Science">
        <title>Empirical analysis of transcriptional activity in the Arabidopsis genome.</title>
        <authorList>
            <person name="Yamada K."/>
            <person name="Lim J."/>
            <person name="Dale J.M."/>
            <person name="Chen H."/>
            <person name="Shinn P."/>
            <person name="Palm C.J."/>
            <person name="Southwick A.M."/>
            <person name="Wu H.C."/>
            <person name="Kim C.J."/>
            <person name="Nguyen M."/>
            <person name="Pham P.K."/>
            <person name="Cheuk R.F."/>
            <person name="Karlin-Newmann G."/>
            <person name="Liu S.X."/>
            <person name="Lam B."/>
            <person name="Sakano H."/>
            <person name="Wu T."/>
            <person name="Yu G."/>
            <person name="Miranda M."/>
            <person name="Quach H.L."/>
            <person name="Tripp M."/>
            <person name="Chang C.H."/>
            <person name="Lee J.M."/>
            <person name="Toriumi M.J."/>
            <person name="Chan M.M."/>
            <person name="Tang C.C."/>
            <person name="Onodera C.S."/>
            <person name="Deng J.M."/>
            <person name="Akiyama K."/>
            <person name="Ansari Y."/>
            <person name="Arakawa T."/>
            <person name="Banh J."/>
            <person name="Banno F."/>
            <person name="Bowser L."/>
            <person name="Brooks S.Y."/>
            <person name="Carninci P."/>
            <person name="Chao Q."/>
            <person name="Choy N."/>
            <person name="Enju A."/>
            <person name="Goldsmith A.D."/>
            <person name="Gurjal M."/>
            <person name="Hansen N.F."/>
            <person name="Hayashizaki Y."/>
            <person name="Johnson-Hopson C."/>
            <person name="Hsuan V.W."/>
            <person name="Iida K."/>
            <person name="Karnes M."/>
            <person name="Khan S."/>
            <person name="Koesema E."/>
            <person name="Ishida J."/>
            <person name="Jiang P.X."/>
            <person name="Jones T."/>
            <person name="Kawai J."/>
            <person name="Kamiya A."/>
            <person name="Meyers C."/>
            <person name="Nakajima M."/>
            <person name="Narusaka M."/>
            <person name="Seki M."/>
            <person name="Sakurai T."/>
            <person name="Satou M."/>
            <person name="Tamse R."/>
            <person name="Vaysberg M."/>
            <person name="Wallender E.K."/>
            <person name="Wong C."/>
            <person name="Yamamura Y."/>
            <person name="Yuan S."/>
            <person name="Shinozaki K."/>
            <person name="Davis R.W."/>
            <person name="Theologis A."/>
            <person name="Ecker J.R."/>
        </authorList>
    </citation>
    <scope>NUCLEOTIDE SEQUENCE [LARGE SCALE MRNA]</scope>
    <source>
        <strain>cv. Columbia</strain>
    </source>
</reference>
<reference key="5">
    <citation type="journal article" date="2005" name="Planta">
        <title>Gene structure and molecular analysis of the laccase-like multicopper oxidase (LMCO) gene family in Arabidopsis thaliana.</title>
        <authorList>
            <person name="McCaig B.C."/>
            <person name="Meagher R.B."/>
            <person name="Dean J.F.D."/>
        </authorList>
    </citation>
    <scope>TISSUE SPECIFICITY</scope>
</reference>
<reference key="6">
    <citation type="journal article" date="2006" name="J. Exp. Bot.">
        <title>Mutant identification and characterization of the laccase gene family in Arabidopsis.</title>
        <authorList>
            <person name="Cai X."/>
            <person name="Davis E.J."/>
            <person name="Ballif J."/>
            <person name="Liang M."/>
            <person name="Bushman E."/>
            <person name="Haroldsen V."/>
            <person name="Torabinejad J."/>
            <person name="Wu Y."/>
        </authorList>
    </citation>
    <scope>TISSUE SPECIFICITY</scope>
</reference>
<sequence>MEGVRVPIACALILLAISSITSASIVEHTFNVQNLTVSRLCKRQVITVVNGSLPGPTIRVKEGDSLVIHVLNHSPHNITIHWHGIFHKLTVWADGPSMITQCPIQPGQRYAYRFNITGQEGTLWWHAHASFLRATVYGALVIRPKSGHSYPFPKPHKEVPILFGEWWNTDVVALEEAAIATGVPPNNSDAYTINGRPGNLYPCSKDRMFSLNVVKGKRYLLRIINAAMNIQLFFKIANHRLTVVAADAVYTAPYVTDVIVIAPGQTIDALLFADQSVDTSYYMAAHPYASAPAVPFPNTTTRGVIHYGGASKTGRSKPVLMPKLPSFFDTLTAYRFYSNLTALVNGPHWVPVPRYVDEEMLVTIGLGLEACADNTTCPKFSASMSNHSFVLPKKLSILEAVFHDVKGIFTADFPDQPPVKFDYTNPNVTQTNPGLLFTQKSTSAKILKFNTTVEVVLQNHALIAAESHPMHLHGFNFHVLAQGFGNYDPSRDRSKLNLVDPQSRNTLAVPVGGWAVIRFTANNPGAWIFHCHIDVHLPFGLGMIFVVKNGPTKSTTLPPPPPDLPKC</sequence>
<keyword id="KW-0052">Apoplast</keyword>
<keyword id="KW-0186">Copper</keyword>
<keyword id="KW-0325">Glycoprotein</keyword>
<keyword id="KW-0439">Lignin degradation</keyword>
<keyword id="KW-0479">Metal-binding</keyword>
<keyword id="KW-0560">Oxidoreductase</keyword>
<keyword id="KW-1185">Reference proteome</keyword>
<keyword id="KW-0677">Repeat</keyword>
<keyword id="KW-0964">Secreted</keyword>
<keyword id="KW-0732">Signal</keyword>
<comment type="function">
    <text evidence="1">Lignin degradation and detoxification of lignin-derived products.</text>
</comment>
<comment type="catalytic activity">
    <reaction>
        <text>4 hydroquinone + O2 = 4 benzosemiquinone + 2 H2O</text>
        <dbReference type="Rhea" id="RHEA:11276"/>
        <dbReference type="ChEBI" id="CHEBI:15377"/>
        <dbReference type="ChEBI" id="CHEBI:15379"/>
        <dbReference type="ChEBI" id="CHEBI:17594"/>
        <dbReference type="ChEBI" id="CHEBI:17977"/>
        <dbReference type="EC" id="1.10.3.2"/>
    </reaction>
</comment>
<comment type="cofactor">
    <cofactor evidence="1">
        <name>Cu cation</name>
        <dbReference type="ChEBI" id="CHEBI:23378"/>
    </cofactor>
    <text evidence="1">Binds 4 Cu cations per monomer.</text>
</comment>
<comment type="subcellular location">
    <subcellularLocation>
        <location evidence="5">Secreted</location>
        <location evidence="5">Extracellular space</location>
        <location evidence="5">Apoplast</location>
    </subcellularLocation>
</comment>
<comment type="tissue specificity">
    <text evidence="3 4">Predominantly expressed in tissues other than the inflorescence stem.</text>
</comment>
<comment type="similarity">
    <text evidence="5">Belongs to the multicopper oxidase family.</text>
</comment>
<organism>
    <name type="scientific">Arabidopsis thaliana</name>
    <name type="common">Mouse-ear cress</name>
    <dbReference type="NCBI Taxonomy" id="3702"/>
    <lineage>
        <taxon>Eukaryota</taxon>
        <taxon>Viridiplantae</taxon>
        <taxon>Streptophyta</taxon>
        <taxon>Embryophyta</taxon>
        <taxon>Tracheophyta</taxon>
        <taxon>Spermatophyta</taxon>
        <taxon>Magnoliopsida</taxon>
        <taxon>eudicotyledons</taxon>
        <taxon>Gunneridae</taxon>
        <taxon>Pentapetalae</taxon>
        <taxon>rosids</taxon>
        <taxon>malvids</taxon>
        <taxon>Brassicales</taxon>
        <taxon>Brassicaceae</taxon>
        <taxon>Camelineae</taxon>
        <taxon>Arabidopsis</taxon>
    </lineage>
</organism>
<name>LAC7_ARATH</name>
<protein>
    <recommendedName>
        <fullName>Laccase-7</fullName>
        <ecNumber>1.10.3.2</ecNumber>
    </recommendedName>
    <alternativeName>
        <fullName>Benzenediol:oxygen oxidoreductase 7</fullName>
    </alternativeName>
    <alternativeName>
        <fullName>Diphenol oxidase 7</fullName>
    </alternativeName>
    <alternativeName>
        <fullName>Urishiol oxidase 7</fullName>
    </alternativeName>
</protein>
<feature type="signal peptide" evidence="2">
    <location>
        <begin position="1"/>
        <end position="23"/>
    </location>
</feature>
<feature type="chain" id="PRO_0000283635" description="Laccase-7">
    <location>
        <begin position="24"/>
        <end position="567"/>
    </location>
</feature>
<feature type="domain" description="Plastocyanin-like 1">
    <location>
        <begin position="31"/>
        <end position="147"/>
    </location>
</feature>
<feature type="domain" description="Plastocyanin-like 2">
    <location>
        <begin position="157"/>
        <end position="310"/>
    </location>
</feature>
<feature type="domain" description="Plastocyanin-like 3">
    <location>
        <begin position="412"/>
        <end position="551"/>
    </location>
</feature>
<feature type="binding site" description="type 2 copper site" evidence="1">
    <location>
        <position position="81"/>
    </location>
    <ligand>
        <name>Cu cation</name>
        <dbReference type="ChEBI" id="CHEBI:23378"/>
        <label>1</label>
    </ligand>
</feature>
<feature type="binding site" description="type 3 copper site" evidence="1">
    <location>
        <position position="83"/>
    </location>
    <ligand>
        <name>Cu cation</name>
        <dbReference type="ChEBI" id="CHEBI:23378"/>
        <label>2</label>
    </ligand>
</feature>
<feature type="binding site" description="type 3 copper site" evidence="1">
    <location>
        <position position="126"/>
    </location>
    <ligand>
        <name>Cu cation</name>
        <dbReference type="ChEBI" id="CHEBI:23378"/>
        <label>2</label>
    </ligand>
</feature>
<feature type="binding site" description="type 3 copper site" evidence="1">
    <location>
        <position position="128"/>
    </location>
    <ligand>
        <name>Cu cation</name>
        <dbReference type="ChEBI" id="CHEBI:23378"/>
        <label>3</label>
    </ligand>
</feature>
<feature type="binding site" description="type 1 copper site" evidence="1">
    <location>
        <position position="468"/>
    </location>
    <ligand>
        <name>Cu cation</name>
        <dbReference type="ChEBI" id="CHEBI:23378"/>
        <label>4</label>
    </ligand>
</feature>
<feature type="binding site" description="type 2 copper site" evidence="1">
    <location>
        <position position="471"/>
    </location>
    <ligand>
        <name>Cu cation</name>
        <dbReference type="ChEBI" id="CHEBI:23378"/>
        <label>1</label>
    </ligand>
</feature>
<feature type="binding site" description="type 3 copper site" evidence="1">
    <location>
        <position position="473"/>
    </location>
    <ligand>
        <name>Cu cation</name>
        <dbReference type="ChEBI" id="CHEBI:23378"/>
        <label>3</label>
    </ligand>
</feature>
<feature type="binding site" description="type 3 copper site" evidence="1">
    <location>
        <position position="530"/>
    </location>
    <ligand>
        <name>Cu cation</name>
        <dbReference type="ChEBI" id="CHEBI:23378"/>
        <label>3</label>
    </ligand>
</feature>
<feature type="binding site" description="type 1 copper site" evidence="1">
    <location>
        <position position="531"/>
    </location>
    <ligand>
        <name>Cu cation</name>
        <dbReference type="ChEBI" id="CHEBI:23378"/>
        <label>4</label>
    </ligand>
</feature>
<feature type="binding site" description="type 3 copper site" evidence="1">
    <location>
        <position position="532"/>
    </location>
    <ligand>
        <name>Cu cation</name>
        <dbReference type="ChEBI" id="CHEBI:23378"/>
        <label>2</label>
    </ligand>
</feature>
<feature type="binding site" description="type 1 copper site" evidence="1">
    <location>
        <position position="536"/>
    </location>
    <ligand>
        <name>Cu cation</name>
        <dbReference type="ChEBI" id="CHEBI:23378"/>
        <label>4</label>
    </ligand>
</feature>
<feature type="glycosylation site" description="N-linked (GlcNAc...) asparagine" evidence="2">
    <location>
        <position position="34"/>
    </location>
</feature>
<feature type="glycosylation site" description="N-linked (GlcNAc...) asparagine" evidence="2">
    <location>
        <position position="50"/>
    </location>
</feature>
<feature type="glycosylation site" description="N-linked (GlcNAc...) asparagine" evidence="2">
    <location>
        <position position="77"/>
    </location>
</feature>
<feature type="glycosylation site" description="N-linked (GlcNAc...) asparagine" evidence="2">
    <location>
        <position position="115"/>
    </location>
</feature>
<feature type="glycosylation site" description="N-linked (GlcNAc...) asparagine" evidence="2">
    <location>
        <position position="186"/>
    </location>
</feature>
<feature type="glycosylation site" description="N-linked (GlcNAc...) asparagine" evidence="2">
    <location>
        <position position="298"/>
    </location>
</feature>
<feature type="glycosylation site" description="N-linked (GlcNAc...) asparagine" evidence="2">
    <location>
        <position position="339"/>
    </location>
</feature>
<feature type="glycosylation site" description="N-linked (GlcNAc...) asparagine" evidence="2">
    <location>
        <position position="374"/>
    </location>
</feature>
<feature type="glycosylation site" description="N-linked (GlcNAc...) asparagine" evidence="2">
    <location>
        <position position="386"/>
    </location>
</feature>
<feature type="glycosylation site" description="N-linked (GlcNAc...) asparagine" evidence="2">
    <location>
        <position position="427"/>
    </location>
</feature>
<feature type="glycosylation site" description="N-linked (GlcNAc...) asparagine" evidence="2">
    <location>
        <position position="450"/>
    </location>
</feature>
<gene>
    <name type="primary">LAC7</name>
    <name type="ordered locus">At3g09220</name>
    <name type="ORF">F3L24.9</name>
</gene>
<proteinExistence type="evidence at transcript level"/>
<dbReference type="EC" id="1.10.3.2"/>
<dbReference type="EMBL" id="AC011436">
    <property type="protein sequence ID" value="AAF14041.1"/>
    <property type="molecule type" value="Genomic_DNA"/>
</dbReference>
<dbReference type="EMBL" id="CP002686">
    <property type="protein sequence ID" value="AEE74739.1"/>
    <property type="molecule type" value="Genomic_DNA"/>
</dbReference>
<dbReference type="EMBL" id="AK117639">
    <property type="protein sequence ID" value="BAC42295.1"/>
    <property type="molecule type" value="mRNA"/>
</dbReference>
<dbReference type="EMBL" id="BT004971">
    <property type="protein sequence ID" value="AAO50504.1"/>
    <property type="molecule type" value="mRNA"/>
</dbReference>
<dbReference type="RefSeq" id="NP_187533.1">
    <property type="nucleotide sequence ID" value="NM_111756.3"/>
</dbReference>
<dbReference type="SMR" id="Q9SR40"/>
<dbReference type="FunCoup" id="Q9SR40">
    <property type="interactions" value="20"/>
</dbReference>
<dbReference type="STRING" id="3702.Q9SR40"/>
<dbReference type="GlyCosmos" id="Q9SR40">
    <property type="glycosylation" value="11 sites, No reported glycans"/>
</dbReference>
<dbReference type="GlyGen" id="Q9SR40">
    <property type="glycosylation" value="11 sites"/>
</dbReference>
<dbReference type="PaxDb" id="3702-AT3G09220.1"/>
<dbReference type="ProteomicsDB" id="238193"/>
<dbReference type="EnsemblPlants" id="AT3G09220.1">
    <property type="protein sequence ID" value="AT3G09220.1"/>
    <property type="gene ID" value="AT3G09220"/>
</dbReference>
<dbReference type="GeneID" id="820078"/>
<dbReference type="Gramene" id="AT3G09220.1">
    <property type="protein sequence ID" value="AT3G09220.1"/>
    <property type="gene ID" value="AT3G09220"/>
</dbReference>
<dbReference type="KEGG" id="ath:AT3G09220"/>
<dbReference type="Araport" id="AT3G09220"/>
<dbReference type="TAIR" id="AT3G09220">
    <property type="gene designation" value="LAC7"/>
</dbReference>
<dbReference type="eggNOG" id="KOG1263">
    <property type="taxonomic scope" value="Eukaryota"/>
</dbReference>
<dbReference type="HOGENOM" id="CLU_006504_6_3_1"/>
<dbReference type="InParanoid" id="Q9SR40"/>
<dbReference type="OMA" id="CDIAPGS"/>
<dbReference type="OrthoDB" id="2121828at2759"/>
<dbReference type="PhylomeDB" id="Q9SR40"/>
<dbReference type="BioCyc" id="ARA:AT3G09220-MONOMER"/>
<dbReference type="PRO" id="PR:Q9SR40"/>
<dbReference type="Proteomes" id="UP000006548">
    <property type="component" value="Chromosome 3"/>
</dbReference>
<dbReference type="ExpressionAtlas" id="Q9SR40">
    <property type="expression patterns" value="baseline and differential"/>
</dbReference>
<dbReference type="GO" id="GO:0048046">
    <property type="term" value="C:apoplast"/>
    <property type="evidence" value="ECO:0007669"/>
    <property type="project" value="UniProtKB-SubCell"/>
</dbReference>
<dbReference type="GO" id="GO:0005507">
    <property type="term" value="F:copper ion binding"/>
    <property type="evidence" value="ECO:0007669"/>
    <property type="project" value="InterPro"/>
</dbReference>
<dbReference type="GO" id="GO:0052716">
    <property type="term" value="F:hydroquinone:oxygen oxidoreductase activity"/>
    <property type="evidence" value="ECO:0007669"/>
    <property type="project" value="UniProtKB-EC"/>
</dbReference>
<dbReference type="GO" id="GO:0046274">
    <property type="term" value="P:lignin catabolic process"/>
    <property type="evidence" value="ECO:0007669"/>
    <property type="project" value="UniProtKB-KW"/>
</dbReference>
<dbReference type="CDD" id="cd13849">
    <property type="entry name" value="CuRO_1_LCC_plant"/>
    <property type="match status" value="1"/>
</dbReference>
<dbReference type="CDD" id="cd13875">
    <property type="entry name" value="CuRO_2_LCC_plant"/>
    <property type="match status" value="1"/>
</dbReference>
<dbReference type="FunFam" id="2.60.40.420:FF:000049">
    <property type="entry name" value="Laccase"/>
    <property type="match status" value="1"/>
</dbReference>
<dbReference type="Gene3D" id="2.60.40.420">
    <property type="entry name" value="Cupredoxins - blue copper proteins"/>
    <property type="match status" value="3"/>
</dbReference>
<dbReference type="InterPro" id="IPR011707">
    <property type="entry name" value="Cu-oxidase-like_N"/>
</dbReference>
<dbReference type="InterPro" id="IPR001117">
    <property type="entry name" value="Cu-oxidase_2nd"/>
</dbReference>
<dbReference type="InterPro" id="IPR011706">
    <property type="entry name" value="Cu-oxidase_C"/>
</dbReference>
<dbReference type="InterPro" id="IPR045087">
    <property type="entry name" value="Cu-oxidase_fam"/>
</dbReference>
<dbReference type="InterPro" id="IPR002355">
    <property type="entry name" value="Cu_oxidase_Cu_BS"/>
</dbReference>
<dbReference type="InterPro" id="IPR008972">
    <property type="entry name" value="Cupredoxin"/>
</dbReference>
<dbReference type="InterPro" id="IPR034288">
    <property type="entry name" value="CuRO_1_LCC"/>
</dbReference>
<dbReference type="InterPro" id="IPR034285">
    <property type="entry name" value="CuRO_2_LCC"/>
</dbReference>
<dbReference type="InterPro" id="IPR017761">
    <property type="entry name" value="Laccase"/>
</dbReference>
<dbReference type="NCBIfam" id="TIGR03389">
    <property type="entry name" value="laccase"/>
    <property type="match status" value="1"/>
</dbReference>
<dbReference type="PANTHER" id="PTHR11709:SF9">
    <property type="entry name" value="LACCASE-7"/>
    <property type="match status" value="1"/>
</dbReference>
<dbReference type="PANTHER" id="PTHR11709">
    <property type="entry name" value="MULTI-COPPER OXIDASE"/>
    <property type="match status" value="1"/>
</dbReference>
<dbReference type="Pfam" id="PF00394">
    <property type="entry name" value="Cu-oxidase"/>
    <property type="match status" value="1"/>
</dbReference>
<dbReference type="Pfam" id="PF07731">
    <property type="entry name" value="Cu-oxidase_2"/>
    <property type="match status" value="1"/>
</dbReference>
<dbReference type="Pfam" id="PF07732">
    <property type="entry name" value="Cu-oxidase_3"/>
    <property type="match status" value="1"/>
</dbReference>
<dbReference type="SUPFAM" id="SSF49503">
    <property type="entry name" value="Cupredoxins"/>
    <property type="match status" value="3"/>
</dbReference>
<dbReference type="PROSITE" id="PS00080">
    <property type="entry name" value="MULTICOPPER_OXIDASE2"/>
    <property type="match status" value="1"/>
</dbReference>